<name>ENTC1_STAAU</name>
<feature type="signal peptide" evidence="3">
    <location>
        <begin position="1"/>
        <end position="27"/>
    </location>
</feature>
<feature type="chain" id="PRO_0000035607" description="Enterotoxin type C-1" evidence="3">
    <location>
        <begin position="28"/>
        <end position="266"/>
    </location>
</feature>
<feature type="disulfide bond" evidence="3">
    <location>
        <begin position="120"/>
        <end position="137"/>
    </location>
</feature>
<feature type="sequence conflict" description="In Ref. 2; AA sequence." evidence="6" ref="2">
    <original>D</original>
    <variation>N</variation>
    <location>
        <position position="177"/>
    </location>
</feature>
<reference key="1">
    <citation type="journal article" date="1987" name="Mol. Gen. Genet.">
        <title>Nucleotide sequence of the staphylococcal enterotoxin C1 gene and relatedness to other pyrogenic toxins.</title>
        <authorList>
            <person name="Bohach G.A."/>
            <person name="Schlievert P.M."/>
        </authorList>
    </citation>
    <scope>NUCLEOTIDE SEQUENCE [GENOMIC DNA]</scope>
</reference>
<reference key="2">
    <citation type="journal article" date="1983" name="J. Biol. Chem.">
        <title>The complete amino acid sequence of staphylococcal enterotoxin C1.</title>
        <authorList>
            <person name="Schmidt J.J."/>
            <person name="Spero L."/>
        </authorList>
    </citation>
    <scope>PROTEIN SEQUENCE OF 28-266</scope>
</reference>
<reference key="3">
    <citation type="journal article" date="1990" name="Immunology">
        <title>Targeting of human cytotoxic T lymphocytes to MHC class II-expressing cells by staphylococcal enterotoxins.</title>
        <authorList>
            <person name="Dohlsten M."/>
            <person name="Lando P.A."/>
            <person name="Hedlund G."/>
            <person name="Trowsdale J."/>
            <person name="Kalland T."/>
        </authorList>
    </citation>
    <scope>FUNCTION</scope>
    <scope>INTERACTION WITH HOST MHC II HLA-DRA AND HLA-DRB1</scope>
</reference>
<reference key="4">
    <citation type="journal article" date="1994" name="Infect. Immun.">
        <title>Predictions of T-cell receptor- and major histocompatibility complex-binding sites on staphylococcal enterotoxin C1.</title>
        <authorList>
            <person name="Hoffmann M.L."/>
            <person name="Jablonski L.M."/>
            <person name="Crum K.K."/>
            <person name="Hackett S.P."/>
            <person name="Chi Y.I."/>
            <person name="Stauffacher C.V."/>
            <person name="Stevens D.L."/>
            <person name="Bohach G.A."/>
        </authorList>
    </citation>
    <scope>FUNCTION</scope>
</reference>
<reference key="5">
    <citation type="journal article" date="1998" name="J. Immunol.">
        <title>Structural dichotomy of staphylococcal enterotoxin C superantigens leading to MHC class II-independent activation of T lymphocytes.</title>
        <authorList>
            <person name="Lamphear J.G."/>
            <person name="Bohach G.A."/>
            <person name="Rich R.R."/>
        </authorList>
    </citation>
    <scope>FUNCTION</scope>
</reference>
<gene>
    <name type="primary">entC1</name>
</gene>
<accession>P01553</accession>
<dbReference type="EMBL" id="X05815">
    <property type="protein sequence ID" value="CAA29260.1"/>
    <property type="molecule type" value="Genomic_DNA"/>
</dbReference>
<dbReference type="PIR" id="S06356">
    <property type="entry name" value="ENSAC1"/>
</dbReference>
<dbReference type="SMR" id="P01553"/>
<dbReference type="Allergome" id="2141">
    <property type="allergen name" value="Sta a SEC"/>
</dbReference>
<dbReference type="ABCD" id="P01553">
    <property type="antibodies" value="11 sequenced antibodies"/>
</dbReference>
<dbReference type="PRO" id="PR:P01553"/>
<dbReference type="GO" id="GO:0005576">
    <property type="term" value="C:extracellular region"/>
    <property type="evidence" value="ECO:0007669"/>
    <property type="project" value="UniProtKB-SubCell"/>
</dbReference>
<dbReference type="GO" id="GO:0090729">
    <property type="term" value="F:toxin activity"/>
    <property type="evidence" value="ECO:0007669"/>
    <property type="project" value="UniProtKB-KW"/>
</dbReference>
<dbReference type="Gene3D" id="2.40.50.110">
    <property type="match status" value="1"/>
</dbReference>
<dbReference type="Gene3D" id="3.10.20.120">
    <property type="match status" value="1"/>
</dbReference>
<dbReference type="InterPro" id="IPR008992">
    <property type="entry name" value="Enterotoxin"/>
</dbReference>
<dbReference type="InterPro" id="IPR006126">
    <property type="entry name" value="Staph/Strept_toxin_CS"/>
</dbReference>
<dbReference type="InterPro" id="IPR006173">
    <property type="entry name" value="Staph_tox_OB"/>
</dbReference>
<dbReference type="InterPro" id="IPR016091">
    <property type="entry name" value="SuperAg_toxin_C"/>
</dbReference>
<dbReference type="InterPro" id="IPR013307">
    <property type="entry name" value="Superantigen_bac"/>
</dbReference>
<dbReference type="InterPro" id="IPR006123">
    <property type="entry name" value="Toxin_b-grasp_Staph/Strep"/>
</dbReference>
<dbReference type="InterPro" id="IPR006177">
    <property type="entry name" value="Toxin_bac"/>
</dbReference>
<dbReference type="Pfam" id="PF02876">
    <property type="entry name" value="Stap_Strp_tox_C"/>
    <property type="match status" value="1"/>
</dbReference>
<dbReference type="Pfam" id="PF01123">
    <property type="entry name" value="Stap_Strp_toxin"/>
    <property type="match status" value="1"/>
</dbReference>
<dbReference type="PRINTS" id="PR00279">
    <property type="entry name" value="BACTRLTOXIN"/>
</dbReference>
<dbReference type="PRINTS" id="PR01898">
    <property type="entry name" value="SAGSUPRFAMLY"/>
</dbReference>
<dbReference type="SUPFAM" id="SSF50203">
    <property type="entry name" value="Bacterial enterotoxins"/>
    <property type="match status" value="1"/>
</dbReference>
<dbReference type="SUPFAM" id="SSF54334">
    <property type="entry name" value="Superantigen toxins, C-terminal domain"/>
    <property type="match status" value="1"/>
</dbReference>
<dbReference type="PROSITE" id="PS00277">
    <property type="entry name" value="STAPH_STREP_TOXIN_1"/>
    <property type="match status" value="1"/>
</dbReference>
<dbReference type="PROSITE" id="PS00278">
    <property type="entry name" value="STAPH_STREP_TOXIN_2"/>
    <property type="match status" value="1"/>
</dbReference>
<organism>
    <name type="scientific">Staphylococcus aureus</name>
    <dbReference type="NCBI Taxonomy" id="1280"/>
    <lineage>
        <taxon>Bacteria</taxon>
        <taxon>Bacillati</taxon>
        <taxon>Bacillota</taxon>
        <taxon>Bacilli</taxon>
        <taxon>Bacillales</taxon>
        <taxon>Staphylococcaceae</taxon>
        <taxon>Staphylococcus</taxon>
    </lineage>
</organism>
<proteinExistence type="evidence at protein level"/>
<protein>
    <recommendedName>
        <fullName>Enterotoxin type C-1</fullName>
    </recommendedName>
    <alternativeName>
        <fullName>SEC1</fullName>
    </alternativeName>
</protein>
<keyword id="KW-0903">Direct protein sequencing</keyword>
<keyword id="KW-1015">Disulfide bond</keyword>
<keyword id="KW-0260">Enterotoxin</keyword>
<keyword id="KW-0964">Secreted</keyword>
<keyword id="KW-0732">Signal</keyword>
<keyword id="KW-0766">Superantigen</keyword>
<keyword id="KW-0800">Toxin</keyword>
<keyword id="KW-0843">Virulence</keyword>
<evidence type="ECO:0000250" key="1">
    <source>
        <dbReference type="UniProtKB" id="P34071"/>
    </source>
</evidence>
<evidence type="ECO:0000269" key="2">
    <source>
    </source>
</evidence>
<evidence type="ECO:0000269" key="3">
    <source>
    </source>
</evidence>
<evidence type="ECO:0000269" key="4">
    <source>
    </source>
</evidence>
<evidence type="ECO:0000269" key="5">
    <source>
    </source>
</evidence>
<evidence type="ECO:0000305" key="6"/>
<sequence>MNKSRFISCVILIFALILVLFTPNVLAESQPDPTPDELHKASKFTGLMENMKVLYDDHYVSATKVKSVDKFLAHDLIYNISDKKLKNYDKVKTELLNEGLAKKYKDEVVDVYGSNYYVNCYFSSKDNVGKVTGGKTCMYGGITKHEGNHFDNGNLQNVLIRVYENKRNTISFEVQTDKKSVTAQELDIKARNFLINKKNLYEFNSSPYETGYIKFIENNGNTFWYDMMPAPGDKFDQSKYLMMYNDNKTVDSKSVKIEVHLTTKNG</sequence>
<comment type="function">
    <text evidence="1 2 4 5">Staphylococcal enterotoxin that activates the host immune system by binding as unprocessed molecules to major histocompatibility (MHC) complex class II and T-cell receptor (TCR) molecules. In turn, this ternary complex activates a large number of T-lymphocytes initiating a systemic release of pro-inflammatory cytokines (PubMed:2210803, PubMed:8039910). Inhibits SEC1-mediated T-cell activation in the absence of MHC class II by competing with SEC1 for binding to the host TCR (PubMed:9498747). Also causes the intoxication staphylococcal food poisoning syndrome (By similarity).</text>
</comment>
<comment type="subunit">
    <text evidence="2">Interacts with host MHC class II molecules composed of alpha/HLA-DRA and beta/HLA-DRB1 chains.</text>
</comment>
<comment type="subcellular location">
    <subcellularLocation>
        <location>Secreted</location>
    </subcellularLocation>
</comment>
<comment type="similarity">
    <text evidence="6">Belongs to the staphylococcal/streptococcal toxin family.</text>
</comment>